<feature type="chain" id="PRO_0000362426" description="ATP synthase subunit a">
    <location>
        <begin position="1"/>
        <end position="242"/>
    </location>
</feature>
<feature type="transmembrane region" description="Helical" evidence="1">
    <location>
        <begin position="29"/>
        <end position="49"/>
    </location>
</feature>
<feature type="transmembrane region" description="Helical" evidence="1">
    <location>
        <begin position="84"/>
        <end position="104"/>
    </location>
</feature>
<feature type="transmembrane region" description="Helical" evidence="1">
    <location>
        <begin position="114"/>
        <end position="134"/>
    </location>
</feature>
<feature type="transmembrane region" description="Helical" evidence="1">
    <location>
        <begin position="140"/>
        <end position="160"/>
    </location>
</feature>
<feature type="transmembrane region" description="Helical" evidence="1">
    <location>
        <begin position="189"/>
        <end position="209"/>
    </location>
</feature>
<feature type="transmembrane region" description="Helical" evidence="1">
    <location>
        <begin position="210"/>
        <end position="230"/>
    </location>
</feature>
<sequence>MTHSPLAQFDIKKLIDIKMFGFDVSFTNSSIYMLLASILALTYFYLAFYNRKLVPSRLQVSAEIVYNLVADMLNQNIGVKGRKFIPLVFSLFIFILFCNLLGMTPYSFTTTSHIIVTFTLAILVFLTVTIVGFVKHGLRFLTLFLPHGTPLWLAPLMIVIELFTYLARPVSLSLRLAANMMAGHVLLKVIAGFTVSLMIYLKFLPIPLMMILIGFEIFVAILQAYIFTILSCMYLNDAINLH</sequence>
<comment type="function">
    <text evidence="1">Key component of the proton channel; it plays a direct role in the translocation of protons across the membrane.</text>
</comment>
<comment type="subunit">
    <text evidence="1">F-type ATPases have 2 components, CF(1) - the catalytic core - and CF(0) - the membrane proton channel. CF(1) has five subunits: alpha(3), beta(3), gamma(1), delta(1), epsilon(1). CF(0) has three main subunits: a(1), b(2) and c(9-12). The alpha and beta chains form an alternating ring which encloses part of the gamma chain. CF(1) is attached to CF(0) by a central stalk formed by the gamma and epsilon chains, while a peripheral stalk is formed by the delta and b chains.</text>
</comment>
<comment type="subcellular location">
    <subcellularLocation>
        <location evidence="1">Cell inner membrane</location>
        <topology evidence="1">Multi-pass membrane protein</topology>
    </subcellularLocation>
</comment>
<comment type="similarity">
    <text evidence="1">Belongs to the ATPase A chain family.</text>
</comment>
<comment type="sequence caution" evidence="2">
    <conflict type="erroneous initiation">
        <sequence resource="EMBL-CDS" id="ABV84365"/>
    </conflict>
</comment>
<organism>
    <name type="scientific">Rickettsia massiliae (strain Mtu5)</name>
    <dbReference type="NCBI Taxonomy" id="416276"/>
    <lineage>
        <taxon>Bacteria</taxon>
        <taxon>Pseudomonadati</taxon>
        <taxon>Pseudomonadota</taxon>
        <taxon>Alphaproteobacteria</taxon>
        <taxon>Rickettsiales</taxon>
        <taxon>Rickettsiaceae</taxon>
        <taxon>Rickettsieae</taxon>
        <taxon>Rickettsia</taxon>
        <taxon>spotted fever group</taxon>
    </lineage>
</organism>
<reference key="1">
    <citation type="journal article" date="2007" name="Genome Res.">
        <title>Lateral gene transfer between obligate intracellular bacteria: evidence from the Rickettsia massiliae genome.</title>
        <authorList>
            <person name="Blanc G."/>
            <person name="Ogata H."/>
            <person name="Robert C."/>
            <person name="Audic S."/>
            <person name="Claverie J.-M."/>
            <person name="Raoult D."/>
        </authorList>
    </citation>
    <scope>NUCLEOTIDE SEQUENCE [LARGE SCALE GENOMIC DNA]</scope>
    <source>
        <strain>Mtu5</strain>
    </source>
</reference>
<gene>
    <name evidence="1" type="primary">atpB</name>
    <name type="ordered locus">RMA_0028</name>
</gene>
<protein>
    <recommendedName>
        <fullName evidence="1">ATP synthase subunit a</fullName>
    </recommendedName>
    <alternativeName>
        <fullName evidence="1">ATP synthase F0 sector subunit a</fullName>
    </alternativeName>
    <alternativeName>
        <fullName evidence="1">F-ATPase subunit 6</fullName>
    </alternativeName>
</protein>
<dbReference type="EMBL" id="CP000683">
    <property type="protein sequence ID" value="ABV84365.1"/>
    <property type="status" value="ALT_INIT"/>
    <property type="molecule type" value="Genomic_DNA"/>
</dbReference>
<dbReference type="RefSeq" id="WP_014365152.1">
    <property type="nucleotide sequence ID" value="NC_009900.1"/>
</dbReference>
<dbReference type="SMR" id="A8F0C9"/>
<dbReference type="KEGG" id="rms:RMA_0028"/>
<dbReference type="HOGENOM" id="CLU_041018_0_2_5"/>
<dbReference type="Proteomes" id="UP000001311">
    <property type="component" value="Chromosome"/>
</dbReference>
<dbReference type="GO" id="GO:0005886">
    <property type="term" value="C:plasma membrane"/>
    <property type="evidence" value="ECO:0007669"/>
    <property type="project" value="UniProtKB-SubCell"/>
</dbReference>
<dbReference type="GO" id="GO:0045259">
    <property type="term" value="C:proton-transporting ATP synthase complex"/>
    <property type="evidence" value="ECO:0007669"/>
    <property type="project" value="UniProtKB-KW"/>
</dbReference>
<dbReference type="GO" id="GO:0046933">
    <property type="term" value="F:proton-transporting ATP synthase activity, rotational mechanism"/>
    <property type="evidence" value="ECO:0007669"/>
    <property type="project" value="UniProtKB-UniRule"/>
</dbReference>
<dbReference type="CDD" id="cd00310">
    <property type="entry name" value="ATP-synt_Fo_a_6"/>
    <property type="match status" value="1"/>
</dbReference>
<dbReference type="FunFam" id="1.20.120.220:FF:000003">
    <property type="entry name" value="ATP synthase subunit a"/>
    <property type="match status" value="1"/>
</dbReference>
<dbReference type="Gene3D" id="1.20.120.220">
    <property type="entry name" value="ATP synthase, F0 complex, subunit A"/>
    <property type="match status" value="1"/>
</dbReference>
<dbReference type="HAMAP" id="MF_01393">
    <property type="entry name" value="ATP_synth_a_bact"/>
    <property type="match status" value="1"/>
</dbReference>
<dbReference type="InterPro" id="IPR000568">
    <property type="entry name" value="ATP_synth_F0_asu"/>
</dbReference>
<dbReference type="InterPro" id="IPR023011">
    <property type="entry name" value="ATP_synth_F0_asu_AS"/>
</dbReference>
<dbReference type="InterPro" id="IPR045083">
    <property type="entry name" value="ATP_synth_F0_asu_bact/mt"/>
</dbReference>
<dbReference type="InterPro" id="IPR035908">
    <property type="entry name" value="F0_ATP_A_sf"/>
</dbReference>
<dbReference type="NCBIfam" id="TIGR01131">
    <property type="entry name" value="ATP_synt_6_or_A"/>
    <property type="match status" value="1"/>
</dbReference>
<dbReference type="NCBIfam" id="NF004482">
    <property type="entry name" value="PRK05815.2-4"/>
    <property type="match status" value="1"/>
</dbReference>
<dbReference type="PANTHER" id="PTHR11410">
    <property type="entry name" value="ATP SYNTHASE SUBUNIT A"/>
    <property type="match status" value="1"/>
</dbReference>
<dbReference type="PANTHER" id="PTHR11410:SF0">
    <property type="entry name" value="ATP SYNTHASE SUBUNIT A"/>
    <property type="match status" value="1"/>
</dbReference>
<dbReference type="Pfam" id="PF00119">
    <property type="entry name" value="ATP-synt_A"/>
    <property type="match status" value="1"/>
</dbReference>
<dbReference type="PRINTS" id="PR00123">
    <property type="entry name" value="ATPASEA"/>
</dbReference>
<dbReference type="SUPFAM" id="SSF81336">
    <property type="entry name" value="F1F0 ATP synthase subunit A"/>
    <property type="match status" value="1"/>
</dbReference>
<dbReference type="PROSITE" id="PS00449">
    <property type="entry name" value="ATPASE_A"/>
    <property type="match status" value="1"/>
</dbReference>
<name>ATP6_RICM5</name>
<proteinExistence type="inferred from homology"/>
<evidence type="ECO:0000255" key="1">
    <source>
        <dbReference type="HAMAP-Rule" id="MF_01393"/>
    </source>
</evidence>
<evidence type="ECO:0000305" key="2"/>
<accession>A8F0C9</accession>
<keyword id="KW-0066">ATP synthesis</keyword>
<keyword id="KW-0997">Cell inner membrane</keyword>
<keyword id="KW-1003">Cell membrane</keyword>
<keyword id="KW-0138">CF(0)</keyword>
<keyword id="KW-0375">Hydrogen ion transport</keyword>
<keyword id="KW-0406">Ion transport</keyword>
<keyword id="KW-0472">Membrane</keyword>
<keyword id="KW-0812">Transmembrane</keyword>
<keyword id="KW-1133">Transmembrane helix</keyword>
<keyword id="KW-0813">Transport</keyword>